<name>YJU2B_MOUSE</name>
<organism>
    <name type="scientific">Mus musculus</name>
    <name type="common">Mouse</name>
    <dbReference type="NCBI Taxonomy" id="10090"/>
    <lineage>
        <taxon>Eukaryota</taxon>
        <taxon>Metazoa</taxon>
        <taxon>Chordata</taxon>
        <taxon>Craniata</taxon>
        <taxon>Vertebrata</taxon>
        <taxon>Euteleostomi</taxon>
        <taxon>Mammalia</taxon>
        <taxon>Eutheria</taxon>
        <taxon>Euarchontoglires</taxon>
        <taxon>Glires</taxon>
        <taxon>Rodentia</taxon>
        <taxon>Myomorpha</taxon>
        <taxon>Muroidea</taxon>
        <taxon>Muridae</taxon>
        <taxon>Murinae</taxon>
        <taxon>Mus</taxon>
        <taxon>Mus</taxon>
    </lineage>
</organism>
<keyword id="KW-0025">Alternative splicing</keyword>
<keyword id="KW-0175">Coiled coil</keyword>
<keyword id="KW-0539">Nucleus</keyword>
<keyword id="KW-0597">Phosphoprotein</keyword>
<keyword id="KW-1185">Reference proteome</keyword>
<sequence>MGERKGQNKYYPPDFNPEKHGSLNRYHNSHPLRERARKLSQGILVIRFEMPYNIWCDGCKNHIGMGVRYNAEKKKVGNYYTTPIYRFRMKCHLCVNYIEMQTDPANCDYVIVSGASRKEERWDMEDNEQVLTTEHEKKEKLETDAMFRLEHGEADRSTLKKALPTLSHIQEAQNAWKDDFALNSMLRRHFREKKKAMQEEEEKDQALQAKASLAIPLVPESEDDRRLAALLRLHTLDSYEDKQRMKRTEIIHRSWFPSAQGPSASSSKASSVLKKLCQGRRPPPSSTGTVGDLGIVRRKSRDVPESPQCAADNSLSEEQRRPPGTTQGSKTLEEAAEASRTSKTSESKRNCSDQAFPLGSSQEDLLNPNTPNASLVADYSDSESE</sequence>
<accession>Q9D516</accession>
<accession>Q8VCB4</accession>
<proteinExistence type="evidence at transcript level"/>
<feature type="chain" id="PRO_0000280046" description="Probable splicing factor YJU2B">
    <location>
        <begin position="1"/>
        <end position="385"/>
    </location>
</feature>
<feature type="region of interest" description="Disordered" evidence="4">
    <location>
        <begin position="1"/>
        <end position="26"/>
    </location>
</feature>
<feature type="region of interest" description="Disordered" evidence="4">
    <location>
        <begin position="257"/>
        <end position="385"/>
    </location>
</feature>
<feature type="coiled-coil region" evidence="3">
    <location>
        <begin position="182"/>
        <end position="214"/>
    </location>
</feature>
<feature type="compositionally biased region" description="Low complexity" evidence="4">
    <location>
        <begin position="258"/>
        <end position="271"/>
    </location>
</feature>
<feature type="compositionally biased region" description="Polar residues" evidence="4">
    <location>
        <begin position="359"/>
        <end position="373"/>
    </location>
</feature>
<feature type="modified residue" description="Phosphoserine" evidence="1">
    <location>
        <position position="40"/>
    </location>
</feature>
<feature type="modified residue" description="Phosphoserine" evidence="1">
    <location>
        <position position="306"/>
    </location>
</feature>
<feature type="splice variant" id="VSP_023900" description="In isoform 2." evidence="5">
    <original>EKKKAMQ</original>
    <variation>LMRTSSE</variation>
    <location>
        <begin position="192"/>
        <end position="198"/>
    </location>
</feature>
<feature type="splice variant" id="VSP_023901" description="In isoform 2." evidence="5">
    <location>
        <begin position="199"/>
        <end position="385"/>
    </location>
</feature>
<dbReference type="EMBL" id="AK015911">
    <property type="protein sequence ID" value="BAB30026.1"/>
    <property type="molecule type" value="mRNA"/>
</dbReference>
<dbReference type="EMBL" id="BC021321">
    <property type="protein sequence ID" value="AAH21321.1"/>
    <property type="molecule type" value="mRNA"/>
</dbReference>
<dbReference type="CCDS" id="CCDS40409.1">
    <molecule id="Q9D516-1"/>
</dbReference>
<dbReference type="CCDS" id="CCDS80906.1">
    <molecule id="Q9D516-2"/>
</dbReference>
<dbReference type="RefSeq" id="NP_001281210.1">
    <molecule id="Q9D516-2"/>
    <property type="nucleotide sequence ID" value="NM_001294281.1"/>
</dbReference>
<dbReference type="RefSeq" id="NP_080626.1">
    <molecule id="Q9D516-1"/>
    <property type="nucleotide sequence ID" value="NM_026350.3"/>
</dbReference>
<dbReference type="RefSeq" id="XP_006531378.1">
    <molecule id="Q9D516-1"/>
    <property type="nucleotide sequence ID" value="XM_006531315.5"/>
</dbReference>
<dbReference type="SMR" id="Q9D516"/>
<dbReference type="FunCoup" id="Q9D516">
    <property type="interactions" value="2210"/>
</dbReference>
<dbReference type="STRING" id="10090.ENSMUSP00000096177"/>
<dbReference type="iPTMnet" id="Q9D516"/>
<dbReference type="PhosphoSitePlus" id="Q9D516"/>
<dbReference type="jPOST" id="Q9D516"/>
<dbReference type="PaxDb" id="10090-ENSMUSP00000096177"/>
<dbReference type="ProteomicsDB" id="265688">
    <molecule id="Q9D516-1"/>
</dbReference>
<dbReference type="ProteomicsDB" id="265689">
    <molecule id="Q9D516-2"/>
</dbReference>
<dbReference type="Antibodypedia" id="54013">
    <property type="antibodies" value="51 antibodies from 12 providers"/>
</dbReference>
<dbReference type="DNASU" id="67736"/>
<dbReference type="Ensembl" id="ENSMUST00000005120.12">
    <molecule id="Q9D516-2"/>
    <property type="protein sequence ID" value="ENSMUSP00000005120.6"/>
    <property type="gene ID" value="ENSMUSG00000004994.13"/>
</dbReference>
<dbReference type="Ensembl" id="ENSMUST00000098578.10">
    <molecule id="Q9D516-1"/>
    <property type="protein sequence ID" value="ENSMUSP00000096177.4"/>
    <property type="gene ID" value="ENSMUSG00000004994.13"/>
</dbReference>
<dbReference type="GeneID" id="67736"/>
<dbReference type="KEGG" id="mmu:67736"/>
<dbReference type="UCSC" id="uc009mmk.2">
    <molecule id="Q9D516-1"/>
    <property type="organism name" value="mouse"/>
</dbReference>
<dbReference type="UCSC" id="uc012ghi.2">
    <molecule id="Q9D516-2"/>
    <property type="organism name" value="mouse"/>
</dbReference>
<dbReference type="AGR" id="MGI:1914986"/>
<dbReference type="CTD" id="81576"/>
<dbReference type="MGI" id="MGI:1914986">
    <property type="gene designation" value="Yju2b"/>
</dbReference>
<dbReference type="VEuPathDB" id="HostDB:ENSMUSG00000004994"/>
<dbReference type="eggNOG" id="KOG2990">
    <property type="taxonomic scope" value="Eukaryota"/>
</dbReference>
<dbReference type="GeneTree" id="ENSGT00530000063615"/>
<dbReference type="HOGENOM" id="CLU_050402_3_1_1"/>
<dbReference type="InParanoid" id="Q9D516"/>
<dbReference type="OMA" id="RNMSVWD"/>
<dbReference type="OrthoDB" id="360327at2759"/>
<dbReference type="PhylomeDB" id="Q9D516"/>
<dbReference type="TreeFam" id="TF313671"/>
<dbReference type="BioGRID-ORCS" id="67736">
    <property type="hits" value="19 hits in 83 CRISPR screens"/>
</dbReference>
<dbReference type="ChiTaRS" id="Ccdc130">
    <property type="organism name" value="mouse"/>
</dbReference>
<dbReference type="PRO" id="PR:Q9D516"/>
<dbReference type="Proteomes" id="UP000000589">
    <property type="component" value="Chromosome 8"/>
</dbReference>
<dbReference type="RNAct" id="Q9D516">
    <property type="molecule type" value="protein"/>
</dbReference>
<dbReference type="Bgee" id="ENSMUSG00000004994">
    <property type="expression patterns" value="Expressed in retinal neural layer and 113 other cell types or tissues"/>
</dbReference>
<dbReference type="ExpressionAtlas" id="Q9D516">
    <property type="expression patterns" value="baseline and differential"/>
</dbReference>
<dbReference type="GO" id="GO:0005634">
    <property type="term" value="C:nucleus"/>
    <property type="evidence" value="ECO:0007669"/>
    <property type="project" value="UniProtKB-SubCell"/>
</dbReference>
<dbReference type="GO" id="GO:0000398">
    <property type="term" value="P:mRNA splicing, via spliceosome"/>
    <property type="evidence" value="ECO:0007669"/>
    <property type="project" value="InterPro"/>
</dbReference>
<dbReference type="GO" id="GO:0009615">
    <property type="term" value="P:response to virus"/>
    <property type="evidence" value="ECO:0007669"/>
    <property type="project" value="Ensembl"/>
</dbReference>
<dbReference type="InterPro" id="IPR007590">
    <property type="entry name" value="Saf4/Yju2"/>
</dbReference>
<dbReference type="PANTHER" id="PTHR12111">
    <property type="entry name" value="SPLICING FACTOR YJU2"/>
    <property type="match status" value="1"/>
</dbReference>
<dbReference type="PANTHER" id="PTHR12111:SF2">
    <property type="entry name" value="SPLICING FACTOR YJU2B-RELATED"/>
    <property type="match status" value="1"/>
</dbReference>
<dbReference type="Pfam" id="PF04502">
    <property type="entry name" value="Saf4_Yju2"/>
    <property type="match status" value="1"/>
</dbReference>
<evidence type="ECO:0000250" key="1">
    <source>
        <dbReference type="UniProtKB" id="P13994"/>
    </source>
</evidence>
<evidence type="ECO:0000250" key="2">
    <source>
        <dbReference type="UniProtKB" id="Q9BW85"/>
    </source>
</evidence>
<evidence type="ECO:0000255" key="3"/>
<evidence type="ECO:0000256" key="4">
    <source>
        <dbReference type="SAM" id="MobiDB-lite"/>
    </source>
</evidence>
<evidence type="ECO:0000303" key="5">
    <source>
    </source>
</evidence>
<evidence type="ECO:0000305" key="6"/>
<evidence type="ECO:0000312" key="7">
    <source>
        <dbReference type="MGI" id="MGI:1914986"/>
    </source>
</evidence>
<reference key="1">
    <citation type="journal article" date="2005" name="Science">
        <title>The transcriptional landscape of the mammalian genome.</title>
        <authorList>
            <person name="Carninci P."/>
            <person name="Kasukawa T."/>
            <person name="Katayama S."/>
            <person name="Gough J."/>
            <person name="Frith M.C."/>
            <person name="Maeda N."/>
            <person name="Oyama R."/>
            <person name="Ravasi T."/>
            <person name="Lenhard B."/>
            <person name="Wells C."/>
            <person name="Kodzius R."/>
            <person name="Shimokawa K."/>
            <person name="Bajic V.B."/>
            <person name="Brenner S.E."/>
            <person name="Batalov S."/>
            <person name="Forrest A.R."/>
            <person name="Zavolan M."/>
            <person name="Davis M.J."/>
            <person name="Wilming L.G."/>
            <person name="Aidinis V."/>
            <person name="Allen J.E."/>
            <person name="Ambesi-Impiombato A."/>
            <person name="Apweiler R."/>
            <person name="Aturaliya R.N."/>
            <person name="Bailey T.L."/>
            <person name="Bansal M."/>
            <person name="Baxter L."/>
            <person name="Beisel K.W."/>
            <person name="Bersano T."/>
            <person name="Bono H."/>
            <person name="Chalk A.M."/>
            <person name="Chiu K.P."/>
            <person name="Choudhary V."/>
            <person name="Christoffels A."/>
            <person name="Clutterbuck D.R."/>
            <person name="Crowe M.L."/>
            <person name="Dalla E."/>
            <person name="Dalrymple B.P."/>
            <person name="de Bono B."/>
            <person name="Della Gatta G."/>
            <person name="di Bernardo D."/>
            <person name="Down T."/>
            <person name="Engstrom P."/>
            <person name="Fagiolini M."/>
            <person name="Faulkner G."/>
            <person name="Fletcher C.F."/>
            <person name="Fukushima T."/>
            <person name="Furuno M."/>
            <person name="Futaki S."/>
            <person name="Gariboldi M."/>
            <person name="Georgii-Hemming P."/>
            <person name="Gingeras T.R."/>
            <person name="Gojobori T."/>
            <person name="Green R.E."/>
            <person name="Gustincich S."/>
            <person name="Harbers M."/>
            <person name="Hayashi Y."/>
            <person name="Hensch T.K."/>
            <person name="Hirokawa N."/>
            <person name="Hill D."/>
            <person name="Huminiecki L."/>
            <person name="Iacono M."/>
            <person name="Ikeo K."/>
            <person name="Iwama A."/>
            <person name="Ishikawa T."/>
            <person name="Jakt M."/>
            <person name="Kanapin A."/>
            <person name="Katoh M."/>
            <person name="Kawasawa Y."/>
            <person name="Kelso J."/>
            <person name="Kitamura H."/>
            <person name="Kitano H."/>
            <person name="Kollias G."/>
            <person name="Krishnan S.P."/>
            <person name="Kruger A."/>
            <person name="Kummerfeld S.K."/>
            <person name="Kurochkin I.V."/>
            <person name="Lareau L.F."/>
            <person name="Lazarevic D."/>
            <person name="Lipovich L."/>
            <person name="Liu J."/>
            <person name="Liuni S."/>
            <person name="McWilliam S."/>
            <person name="Madan Babu M."/>
            <person name="Madera M."/>
            <person name="Marchionni L."/>
            <person name="Matsuda H."/>
            <person name="Matsuzawa S."/>
            <person name="Miki H."/>
            <person name="Mignone F."/>
            <person name="Miyake S."/>
            <person name="Morris K."/>
            <person name="Mottagui-Tabar S."/>
            <person name="Mulder N."/>
            <person name="Nakano N."/>
            <person name="Nakauchi H."/>
            <person name="Ng P."/>
            <person name="Nilsson R."/>
            <person name="Nishiguchi S."/>
            <person name="Nishikawa S."/>
            <person name="Nori F."/>
            <person name="Ohara O."/>
            <person name="Okazaki Y."/>
            <person name="Orlando V."/>
            <person name="Pang K.C."/>
            <person name="Pavan W.J."/>
            <person name="Pavesi G."/>
            <person name="Pesole G."/>
            <person name="Petrovsky N."/>
            <person name="Piazza S."/>
            <person name="Reed J."/>
            <person name="Reid J.F."/>
            <person name="Ring B.Z."/>
            <person name="Ringwald M."/>
            <person name="Rost B."/>
            <person name="Ruan Y."/>
            <person name="Salzberg S.L."/>
            <person name="Sandelin A."/>
            <person name="Schneider C."/>
            <person name="Schoenbach C."/>
            <person name="Sekiguchi K."/>
            <person name="Semple C.A."/>
            <person name="Seno S."/>
            <person name="Sessa L."/>
            <person name="Sheng Y."/>
            <person name="Shibata Y."/>
            <person name="Shimada H."/>
            <person name="Shimada K."/>
            <person name="Silva D."/>
            <person name="Sinclair B."/>
            <person name="Sperling S."/>
            <person name="Stupka E."/>
            <person name="Sugiura K."/>
            <person name="Sultana R."/>
            <person name="Takenaka Y."/>
            <person name="Taki K."/>
            <person name="Tammoja K."/>
            <person name="Tan S.L."/>
            <person name="Tang S."/>
            <person name="Taylor M.S."/>
            <person name="Tegner J."/>
            <person name="Teichmann S.A."/>
            <person name="Ueda H.R."/>
            <person name="van Nimwegen E."/>
            <person name="Verardo R."/>
            <person name="Wei C.L."/>
            <person name="Yagi K."/>
            <person name="Yamanishi H."/>
            <person name="Zabarovsky E."/>
            <person name="Zhu S."/>
            <person name="Zimmer A."/>
            <person name="Hide W."/>
            <person name="Bult C."/>
            <person name="Grimmond S.M."/>
            <person name="Teasdale R.D."/>
            <person name="Liu E.T."/>
            <person name="Brusic V."/>
            <person name="Quackenbush J."/>
            <person name="Wahlestedt C."/>
            <person name="Mattick J.S."/>
            <person name="Hume D.A."/>
            <person name="Kai C."/>
            <person name="Sasaki D."/>
            <person name="Tomaru Y."/>
            <person name="Fukuda S."/>
            <person name="Kanamori-Katayama M."/>
            <person name="Suzuki M."/>
            <person name="Aoki J."/>
            <person name="Arakawa T."/>
            <person name="Iida J."/>
            <person name="Imamura K."/>
            <person name="Itoh M."/>
            <person name="Kato T."/>
            <person name="Kawaji H."/>
            <person name="Kawagashira N."/>
            <person name="Kawashima T."/>
            <person name="Kojima M."/>
            <person name="Kondo S."/>
            <person name="Konno H."/>
            <person name="Nakano K."/>
            <person name="Ninomiya N."/>
            <person name="Nishio T."/>
            <person name="Okada M."/>
            <person name="Plessy C."/>
            <person name="Shibata K."/>
            <person name="Shiraki T."/>
            <person name="Suzuki S."/>
            <person name="Tagami M."/>
            <person name="Waki K."/>
            <person name="Watahiki A."/>
            <person name="Okamura-Oho Y."/>
            <person name="Suzuki H."/>
            <person name="Kawai J."/>
            <person name="Hayashizaki Y."/>
        </authorList>
    </citation>
    <scope>NUCLEOTIDE SEQUENCE [LARGE SCALE MRNA] (ISOFORM 1)</scope>
    <source>
        <strain>C57BL/6J</strain>
        <tissue>Testis</tissue>
    </source>
</reference>
<reference key="2">
    <citation type="journal article" date="2004" name="Genome Res.">
        <title>The status, quality, and expansion of the NIH full-length cDNA project: the Mammalian Gene Collection (MGC).</title>
        <authorList>
            <consortium name="The MGC Project Team"/>
        </authorList>
    </citation>
    <scope>NUCLEOTIDE SEQUENCE [LARGE SCALE MRNA] (ISOFORM 2)</scope>
    <source>
        <strain>FVB/N</strain>
        <tissue>Kidney</tissue>
    </source>
</reference>
<gene>
    <name type="primary">Yju2b</name>
    <name evidence="7" type="synonym">Ccdc130</name>
</gene>
<protein>
    <recommendedName>
        <fullName evidence="6">Probable splicing factor YJU2B</fullName>
    </recommendedName>
    <alternativeName>
        <fullName evidence="7">Coiled-coil domain-containing protein 130</fullName>
    </alternativeName>
</protein>
<comment type="function">
    <text evidence="2">May be involved in mRNA splicing.</text>
</comment>
<comment type="subcellular location">
    <subcellularLocation>
        <location evidence="2">Nucleus</location>
    </subcellularLocation>
</comment>
<comment type="alternative products">
    <event type="alternative splicing"/>
    <isoform>
        <id>Q9D516-1</id>
        <name>1</name>
        <sequence type="displayed"/>
    </isoform>
    <isoform>
        <id>Q9D516-2</id>
        <name>2</name>
        <sequence type="described" ref="VSP_023900 VSP_023901"/>
    </isoform>
</comment>
<comment type="similarity">
    <text evidence="6">Belongs to the CWC16 family.</text>
</comment>